<dbReference type="EC" id="3.1.-.-" evidence="1"/>
<dbReference type="EMBL" id="CP000725">
    <property type="protein sequence ID" value="ABV10309.1"/>
    <property type="molecule type" value="Genomic_DNA"/>
</dbReference>
<dbReference type="RefSeq" id="WP_008808587.1">
    <property type="nucleotide sequence ID" value="NC_009785.1"/>
</dbReference>
<dbReference type="SMR" id="A8AVU9"/>
<dbReference type="STRING" id="467705.SGO_0593"/>
<dbReference type="KEGG" id="sgo:SGO_0593"/>
<dbReference type="eggNOG" id="COG1418">
    <property type="taxonomic scope" value="Bacteria"/>
</dbReference>
<dbReference type="HOGENOM" id="CLU_028328_1_0_9"/>
<dbReference type="Proteomes" id="UP000001131">
    <property type="component" value="Chromosome"/>
</dbReference>
<dbReference type="GO" id="GO:0005886">
    <property type="term" value="C:plasma membrane"/>
    <property type="evidence" value="ECO:0007669"/>
    <property type="project" value="UniProtKB-SubCell"/>
</dbReference>
<dbReference type="GO" id="GO:0003723">
    <property type="term" value="F:RNA binding"/>
    <property type="evidence" value="ECO:0007669"/>
    <property type="project" value="UniProtKB-UniRule"/>
</dbReference>
<dbReference type="GO" id="GO:0004521">
    <property type="term" value="F:RNA endonuclease activity"/>
    <property type="evidence" value="ECO:0007669"/>
    <property type="project" value="UniProtKB-UniRule"/>
</dbReference>
<dbReference type="GO" id="GO:0006402">
    <property type="term" value="P:mRNA catabolic process"/>
    <property type="evidence" value="ECO:0007669"/>
    <property type="project" value="UniProtKB-UniRule"/>
</dbReference>
<dbReference type="CDD" id="cd00077">
    <property type="entry name" value="HDc"/>
    <property type="match status" value="1"/>
</dbReference>
<dbReference type="CDD" id="cd22431">
    <property type="entry name" value="KH-I_RNaseY"/>
    <property type="match status" value="1"/>
</dbReference>
<dbReference type="FunFam" id="1.10.3210.10:FF:000003">
    <property type="entry name" value="Ribonuclease Y"/>
    <property type="match status" value="1"/>
</dbReference>
<dbReference type="Gene3D" id="1.10.3210.10">
    <property type="entry name" value="Hypothetical protein af1432"/>
    <property type="match status" value="1"/>
</dbReference>
<dbReference type="Gene3D" id="3.30.1370.10">
    <property type="entry name" value="K Homology domain, type 1"/>
    <property type="match status" value="1"/>
</dbReference>
<dbReference type="HAMAP" id="MF_00335">
    <property type="entry name" value="RNase_Y"/>
    <property type="match status" value="1"/>
</dbReference>
<dbReference type="InterPro" id="IPR003607">
    <property type="entry name" value="HD/PDEase_dom"/>
</dbReference>
<dbReference type="InterPro" id="IPR006674">
    <property type="entry name" value="HD_domain"/>
</dbReference>
<dbReference type="InterPro" id="IPR006675">
    <property type="entry name" value="HDIG_dom"/>
</dbReference>
<dbReference type="InterPro" id="IPR004087">
    <property type="entry name" value="KH_dom"/>
</dbReference>
<dbReference type="InterPro" id="IPR004088">
    <property type="entry name" value="KH_dom_type_1"/>
</dbReference>
<dbReference type="InterPro" id="IPR036612">
    <property type="entry name" value="KH_dom_type_1_sf"/>
</dbReference>
<dbReference type="InterPro" id="IPR017705">
    <property type="entry name" value="Ribonuclease_Y"/>
</dbReference>
<dbReference type="InterPro" id="IPR022711">
    <property type="entry name" value="RNase_Y_N"/>
</dbReference>
<dbReference type="NCBIfam" id="TIGR00277">
    <property type="entry name" value="HDIG"/>
    <property type="match status" value="1"/>
</dbReference>
<dbReference type="NCBIfam" id="NF000997">
    <property type="entry name" value="PRK00106.1"/>
    <property type="match status" value="1"/>
</dbReference>
<dbReference type="NCBIfam" id="TIGR03319">
    <property type="entry name" value="RNase_Y"/>
    <property type="match status" value="1"/>
</dbReference>
<dbReference type="PANTHER" id="PTHR12826">
    <property type="entry name" value="RIBONUCLEASE Y"/>
    <property type="match status" value="1"/>
</dbReference>
<dbReference type="PANTHER" id="PTHR12826:SF15">
    <property type="entry name" value="RIBONUCLEASE Y"/>
    <property type="match status" value="1"/>
</dbReference>
<dbReference type="Pfam" id="PF01966">
    <property type="entry name" value="HD"/>
    <property type="match status" value="1"/>
</dbReference>
<dbReference type="Pfam" id="PF00013">
    <property type="entry name" value="KH_1"/>
    <property type="match status" value="1"/>
</dbReference>
<dbReference type="Pfam" id="PF12072">
    <property type="entry name" value="RNase_Y_N"/>
    <property type="match status" value="1"/>
</dbReference>
<dbReference type="SMART" id="SM00471">
    <property type="entry name" value="HDc"/>
    <property type="match status" value="1"/>
</dbReference>
<dbReference type="SMART" id="SM00322">
    <property type="entry name" value="KH"/>
    <property type="match status" value="1"/>
</dbReference>
<dbReference type="SUPFAM" id="SSF54791">
    <property type="entry name" value="Eukaryotic type KH-domain (KH-domain type I)"/>
    <property type="match status" value="1"/>
</dbReference>
<dbReference type="SUPFAM" id="SSF109604">
    <property type="entry name" value="HD-domain/PDEase-like"/>
    <property type="match status" value="1"/>
</dbReference>
<dbReference type="PROSITE" id="PS51831">
    <property type="entry name" value="HD"/>
    <property type="match status" value="1"/>
</dbReference>
<dbReference type="PROSITE" id="PS50084">
    <property type="entry name" value="KH_TYPE_1"/>
    <property type="match status" value="1"/>
</dbReference>
<comment type="function">
    <text evidence="1">Endoribonuclease that initiates mRNA decay.</text>
</comment>
<comment type="subcellular location">
    <subcellularLocation>
        <location evidence="1">Cell membrane</location>
        <topology evidence="1">Single-pass membrane protein</topology>
    </subcellularLocation>
</comment>
<comment type="similarity">
    <text evidence="1">Belongs to the RNase Y family.</text>
</comment>
<reference key="1">
    <citation type="journal article" date="2007" name="J. Bacteriol.">
        <title>Genome-wide transcriptional changes in Streptococcus gordonii in response to competence signaling peptide.</title>
        <authorList>
            <person name="Vickerman M.M."/>
            <person name="Iobst S."/>
            <person name="Jesionowski A.M."/>
            <person name="Gill S.R."/>
        </authorList>
    </citation>
    <scope>NUCLEOTIDE SEQUENCE [LARGE SCALE GENOMIC DNA]</scope>
    <source>
        <strain>Challis / ATCC 35105 / BCRC 15272 / CH1 / DL1 / V288</strain>
    </source>
</reference>
<keyword id="KW-1003">Cell membrane</keyword>
<keyword id="KW-0255">Endonuclease</keyword>
<keyword id="KW-0378">Hydrolase</keyword>
<keyword id="KW-0472">Membrane</keyword>
<keyword id="KW-0540">Nuclease</keyword>
<keyword id="KW-1185">Reference proteome</keyword>
<keyword id="KW-0694">RNA-binding</keyword>
<keyword id="KW-0812">Transmembrane</keyword>
<keyword id="KW-1133">Transmembrane helix</keyword>
<name>RNY_STRGC</name>
<proteinExistence type="inferred from homology"/>
<accession>A8AVU9</accession>
<gene>
    <name evidence="1" type="primary">rny</name>
    <name type="ordered locus">SGO_0593</name>
</gene>
<feature type="chain" id="PRO_0000344940" description="Ribonuclease Y">
    <location>
        <begin position="1"/>
        <end position="535"/>
    </location>
</feature>
<feature type="transmembrane region" description="Helical" evidence="1">
    <location>
        <begin position="3"/>
        <end position="23"/>
    </location>
</feature>
<feature type="domain" description="KH" evidence="1">
    <location>
        <begin position="225"/>
        <end position="285"/>
    </location>
</feature>
<feature type="domain" description="HD" evidence="2">
    <location>
        <begin position="351"/>
        <end position="444"/>
    </location>
</feature>
<feature type="region of interest" description="Disordered" evidence="3">
    <location>
        <begin position="99"/>
        <end position="126"/>
    </location>
</feature>
<sequence>MEMIFALVFAVIIGLVIGYVSISARMKSSKEAAELTLLNAEQEATNLRGQAEREADIILKDAKRETNSLKKEALLEAKEEARKYREEVEAEFKSERQELKQTESRLTERAASLDRKDDNLTNKEKLLEQKEQSLSDKTKYIDEREEQLAELEKQKEAELERVASLSQNEARDLILAQTEEKLTKEIAMRIREAEQEVKERSDKMAKDILVQAMQRIAGDYVAEQTNSTVHLPDDTMKGRIIGREGRNIRTFESLTGIDVIIDDTPDVVTLSGFDPVRREIARMTMEALLKDGRIHPARIEELVEKNRLEIDNRIREYGEAAAYEIGAPNLHPDLMKIMGRLQFRTSYGQNVLRHSIEVAKLAGVIAGELGENATLARRAGFLHDIGKAIDREVEGSHVEIGTELARKYKENPIVVNTIASHHGDVEAESVIAVIVAAADALSAARPGARSESLESYIKRLHDLEEIANEFDGVKTSFALQAGREIRIMVHPEKIKDDKVTILAHDVREKIENNLEYPGNIKVTVIRELRAVDYAK</sequence>
<protein>
    <recommendedName>
        <fullName evidence="1">Ribonuclease Y</fullName>
        <shortName evidence="1">RNase Y</shortName>
        <ecNumber evidence="1">3.1.-.-</ecNumber>
    </recommendedName>
</protein>
<evidence type="ECO:0000255" key="1">
    <source>
        <dbReference type="HAMAP-Rule" id="MF_00335"/>
    </source>
</evidence>
<evidence type="ECO:0000255" key="2">
    <source>
        <dbReference type="PROSITE-ProRule" id="PRU01175"/>
    </source>
</evidence>
<evidence type="ECO:0000256" key="3">
    <source>
        <dbReference type="SAM" id="MobiDB-lite"/>
    </source>
</evidence>
<organism>
    <name type="scientific">Streptococcus gordonii (strain Challis / ATCC 35105 / BCRC 15272 / CH1 / DL1 / V288)</name>
    <dbReference type="NCBI Taxonomy" id="467705"/>
    <lineage>
        <taxon>Bacteria</taxon>
        <taxon>Bacillati</taxon>
        <taxon>Bacillota</taxon>
        <taxon>Bacilli</taxon>
        <taxon>Lactobacillales</taxon>
        <taxon>Streptococcaceae</taxon>
        <taxon>Streptococcus</taxon>
    </lineage>
</organism>